<comment type="function">
    <text evidence="1">Key component of the proton channel; it plays a direct role in the translocation of protons across the membrane.</text>
</comment>
<comment type="subunit">
    <text evidence="1">F-type ATPases have 2 components, CF(1) - the catalytic core - and CF(0) - the membrane proton channel. CF(1) has five subunits: alpha(3), beta(3), gamma(1), delta(1), epsilon(1). CF(0) has three main subunits: a(1), b(2) and c(9-12). The alpha and beta chains form an alternating ring which encloses part of the gamma chain. CF(1) is attached to CF(0) by a central stalk formed by the gamma and epsilon chains, while a peripheral stalk is formed by the delta and b chains.</text>
</comment>
<comment type="subcellular location">
    <subcellularLocation>
        <location evidence="1">Cell inner membrane</location>
        <topology evidence="1">Multi-pass membrane protein</topology>
    </subcellularLocation>
</comment>
<comment type="similarity">
    <text evidence="1">Belongs to the ATPase A chain family.</text>
</comment>
<evidence type="ECO:0000255" key="1">
    <source>
        <dbReference type="HAMAP-Rule" id="MF_01393"/>
    </source>
</evidence>
<accession>Q1R4J4</accession>
<name>ATP6_ECOUT</name>
<dbReference type="EMBL" id="CP000243">
    <property type="protein sequence ID" value="ABE09720.1"/>
    <property type="molecule type" value="Genomic_DNA"/>
</dbReference>
<dbReference type="RefSeq" id="WP_000135618.1">
    <property type="nucleotide sequence ID" value="NZ_CP064825.1"/>
</dbReference>
<dbReference type="SMR" id="Q1R4J4"/>
<dbReference type="GeneID" id="86948620"/>
<dbReference type="KEGG" id="eci:UTI89_C4293"/>
<dbReference type="HOGENOM" id="CLU_041018_1_0_6"/>
<dbReference type="Proteomes" id="UP000001952">
    <property type="component" value="Chromosome"/>
</dbReference>
<dbReference type="GO" id="GO:0005886">
    <property type="term" value="C:plasma membrane"/>
    <property type="evidence" value="ECO:0007669"/>
    <property type="project" value="UniProtKB-SubCell"/>
</dbReference>
<dbReference type="GO" id="GO:0045259">
    <property type="term" value="C:proton-transporting ATP synthase complex"/>
    <property type="evidence" value="ECO:0007669"/>
    <property type="project" value="UniProtKB-KW"/>
</dbReference>
<dbReference type="GO" id="GO:0046933">
    <property type="term" value="F:proton-transporting ATP synthase activity, rotational mechanism"/>
    <property type="evidence" value="ECO:0007669"/>
    <property type="project" value="UniProtKB-UniRule"/>
</dbReference>
<dbReference type="GO" id="GO:0042777">
    <property type="term" value="P:proton motive force-driven plasma membrane ATP synthesis"/>
    <property type="evidence" value="ECO:0007669"/>
    <property type="project" value="TreeGrafter"/>
</dbReference>
<dbReference type="CDD" id="cd00310">
    <property type="entry name" value="ATP-synt_Fo_a_6"/>
    <property type="match status" value="1"/>
</dbReference>
<dbReference type="FunFam" id="1.20.120.220:FF:000002">
    <property type="entry name" value="ATP synthase subunit a"/>
    <property type="match status" value="1"/>
</dbReference>
<dbReference type="Gene3D" id="1.20.120.220">
    <property type="entry name" value="ATP synthase, F0 complex, subunit A"/>
    <property type="match status" value="1"/>
</dbReference>
<dbReference type="HAMAP" id="MF_01393">
    <property type="entry name" value="ATP_synth_a_bact"/>
    <property type="match status" value="1"/>
</dbReference>
<dbReference type="InterPro" id="IPR045082">
    <property type="entry name" value="ATP_syn_F0_a_bact/chloroplast"/>
</dbReference>
<dbReference type="InterPro" id="IPR000568">
    <property type="entry name" value="ATP_synth_F0_asu"/>
</dbReference>
<dbReference type="InterPro" id="IPR023011">
    <property type="entry name" value="ATP_synth_F0_asu_AS"/>
</dbReference>
<dbReference type="InterPro" id="IPR035908">
    <property type="entry name" value="F0_ATP_A_sf"/>
</dbReference>
<dbReference type="NCBIfam" id="TIGR01131">
    <property type="entry name" value="ATP_synt_6_or_A"/>
    <property type="match status" value="1"/>
</dbReference>
<dbReference type="NCBIfam" id="NF004477">
    <property type="entry name" value="PRK05815.1-1"/>
    <property type="match status" value="1"/>
</dbReference>
<dbReference type="PANTHER" id="PTHR42823">
    <property type="entry name" value="ATP SYNTHASE SUBUNIT A, CHLOROPLASTIC"/>
    <property type="match status" value="1"/>
</dbReference>
<dbReference type="PANTHER" id="PTHR42823:SF3">
    <property type="entry name" value="ATP SYNTHASE SUBUNIT A, CHLOROPLASTIC"/>
    <property type="match status" value="1"/>
</dbReference>
<dbReference type="Pfam" id="PF00119">
    <property type="entry name" value="ATP-synt_A"/>
    <property type="match status" value="1"/>
</dbReference>
<dbReference type="PRINTS" id="PR00123">
    <property type="entry name" value="ATPASEA"/>
</dbReference>
<dbReference type="SUPFAM" id="SSF81336">
    <property type="entry name" value="F1F0 ATP synthase subunit A"/>
    <property type="match status" value="1"/>
</dbReference>
<dbReference type="PROSITE" id="PS00449">
    <property type="entry name" value="ATPASE_A"/>
    <property type="match status" value="1"/>
</dbReference>
<feature type="chain" id="PRO_0000362302" description="ATP synthase subunit a">
    <location>
        <begin position="1"/>
        <end position="271"/>
    </location>
</feature>
<feature type="transmembrane region" description="Helical" evidence="1">
    <location>
        <begin position="40"/>
        <end position="60"/>
    </location>
</feature>
<feature type="transmembrane region" description="Helical" evidence="1">
    <location>
        <begin position="100"/>
        <end position="120"/>
    </location>
</feature>
<feature type="transmembrane region" description="Helical" evidence="1">
    <location>
        <begin position="146"/>
        <end position="166"/>
    </location>
</feature>
<feature type="transmembrane region" description="Helical" evidence="1">
    <location>
        <begin position="220"/>
        <end position="240"/>
    </location>
</feature>
<feature type="transmembrane region" description="Helical" evidence="1">
    <location>
        <begin position="242"/>
        <end position="262"/>
    </location>
</feature>
<organism>
    <name type="scientific">Escherichia coli (strain UTI89 / UPEC)</name>
    <dbReference type="NCBI Taxonomy" id="364106"/>
    <lineage>
        <taxon>Bacteria</taxon>
        <taxon>Pseudomonadati</taxon>
        <taxon>Pseudomonadota</taxon>
        <taxon>Gammaproteobacteria</taxon>
        <taxon>Enterobacterales</taxon>
        <taxon>Enterobacteriaceae</taxon>
        <taxon>Escherichia</taxon>
    </lineage>
</organism>
<keyword id="KW-0066">ATP synthesis</keyword>
<keyword id="KW-0997">Cell inner membrane</keyword>
<keyword id="KW-1003">Cell membrane</keyword>
<keyword id="KW-0138">CF(0)</keyword>
<keyword id="KW-0375">Hydrogen ion transport</keyword>
<keyword id="KW-0406">Ion transport</keyword>
<keyword id="KW-0472">Membrane</keyword>
<keyword id="KW-0812">Transmembrane</keyword>
<keyword id="KW-1133">Transmembrane helix</keyword>
<keyword id="KW-0813">Transport</keyword>
<gene>
    <name evidence="1" type="primary">atpB</name>
    <name type="ordered locus">UTI89_C4293</name>
</gene>
<protein>
    <recommendedName>
        <fullName evidence="1">ATP synthase subunit a</fullName>
    </recommendedName>
    <alternativeName>
        <fullName evidence="1">ATP synthase F0 sector subunit a</fullName>
    </alternativeName>
    <alternativeName>
        <fullName evidence="1">F-ATPase subunit 6</fullName>
    </alternativeName>
</protein>
<sequence>MASENMTPQDYIGHHLNNLQLDLRTFSLVDPHNPPATFWTINIDSMFFSVVLGLLFLVLFRSVAKKATSGVPGKFQTAIELVIGFVNGSVKDMYHGKSKLIAPLALTIFVWVFLMNLMDLLPIDLLPYIAEHVLGLPALRVVPSADVNVTLSMALGVFILILFYSIKMKGIGGFTKELTLQPFNHWAFIPVNLILEGVSLLSKPVSLGLRLFGNMYAGELIFILIAGLLPWWSQWILNVPWAIFHILIITLQAFIFMVLTIVYLSMASEEH</sequence>
<reference key="1">
    <citation type="journal article" date="2006" name="Proc. Natl. Acad. Sci. U.S.A.">
        <title>Identification of genes subject to positive selection in uropathogenic strains of Escherichia coli: a comparative genomics approach.</title>
        <authorList>
            <person name="Chen S.L."/>
            <person name="Hung C.-S."/>
            <person name="Xu J."/>
            <person name="Reigstad C.S."/>
            <person name="Magrini V."/>
            <person name="Sabo A."/>
            <person name="Blasiar D."/>
            <person name="Bieri T."/>
            <person name="Meyer R.R."/>
            <person name="Ozersky P."/>
            <person name="Armstrong J.R."/>
            <person name="Fulton R.S."/>
            <person name="Latreille J.P."/>
            <person name="Spieth J."/>
            <person name="Hooton T.M."/>
            <person name="Mardis E.R."/>
            <person name="Hultgren S.J."/>
            <person name="Gordon J.I."/>
        </authorList>
    </citation>
    <scope>NUCLEOTIDE SEQUENCE [LARGE SCALE GENOMIC DNA]</scope>
    <source>
        <strain>UTI89 / UPEC</strain>
    </source>
</reference>
<proteinExistence type="inferred from homology"/>